<gene>
    <name evidence="1" type="primary">frr</name>
    <name type="ordered locus">BUsg_228</name>
</gene>
<evidence type="ECO:0000255" key="1">
    <source>
        <dbReference type="HAMAP-Rule" id="MF_00040"/>
    </source>
</evidence>
<reference key="1">
    <citation type="journal article" date="2002" name="Science">
        <title>50 million years of genomic stasis in endosymbiotic bacteria.</title>
        <authorList>
            <person name="Tamas I."/>
            <person name="Klasson L."/>
            <person name="Canbaeck B."/>
            <person name="Naeslund A.K."/>
            <person name="Eriksson A.-S."/>
            <person name="Wernegreen J.J."/>
            <person name="Sandstroem J.P."/>
            <person name="Moran N.A."/>
            <person name="Andersson S.G.E."/>
        </authorList>
    </citation>
    <scope>NUCLEOTIDE SEQUENCE [LARGE SCALE GENOMIC DNA]</scope>
    <source>
        <strain>Sg</strain>
    </source>
</reference>
<proteinExistence type="inferred from homology"/>
<keyword id="KW-0963">Cytoplasm</keyword>
<keyword id="KW-0648">Protein biosynthesis</keyword>
<sequence>MINDIYIKSNEKMKVCINNFQIQVNNVRTGRASPELLNSIYVEYFGSKVPLRQISNVVVENYHTLKINIFDDSSTSLIKKAILNSNLDLNPILYGKDIIVPIPGLTEERRTHLIKVIRNNAENARIYIRNIRRDANDKIKNYLKSKIISEDNEHAAQNKIQTMTDDYIKKIDKILSEKEKDLMKF</sequence>
<comment type="function">
    <text evidence="1">Responsible for the release of ribosomes from messenger RNA at the termination of protein biosynthesis. May increase the efficiency of translation by recycling ribosomes from one round of translation to another.</text>
</comment>
<comment type="subcellular location">
    <subcellularLocation>
        <location evidence="1">Cytoplasm</location>
    </subcellularLocation>
</comment>
<comment type="similarity">
    <text evidence="1">Belongs to the RRF family.</text>
</comment>
<feature type="chain" id="PRO_0000167429" description="Ribosome-recycling factor">
    <location>
        <begin position="1"/>
        <end position="185"/>
    </location>
</feature>
<protein>
    <recommendedName>
        <fullName evidence="1">Ribosome-recycling factor</fullName>
        <shortName evidence="1">RRF</shortName>
    </recommendedName>
    <alternativeName>
        <fullName evidence="1">Ribosome-releasing factor</fullName>
    </alternativeName>
</protein>
<organism>
    <name type="scientific">Buchnera aphidicola subsp. Schizaphis graminum (strain Sg)</name>
    <dbReference type="NCBI Taxonomy" id="198804"/>
    <lineage>
        <taxon>Bacteria</taxon>
        <taxon>Pseudomonadati</taxon>
        <taxon>Pseudomonadota</taxon>
        <taxon>Gammaproteobacteria</taxon>
        <taxon>Enterobacterales</taxon>
        <taxon>Erwiniaceae</taxon>
        <taxon>Buchnera</taxon>
    </lineage>
</organism>
<dbReference type="EMBL" id="AE013218">
    <property type="protein sequence ID" value="AAM67787.1"/>
    <property type="molecule type" value="Genomic_DNA"/>
</dbReference>
<dbReference type="RefSeq" id="WP_011053754.1">
    <property type="nucleotide sequence ID" value="NC_004061.1"/>
</dbReference>
<dbReference type="SMR" id="Q8K9S8"/>
<dbReference type="STRING" id="198804.BUsg_228"/>
<dbReference type="GeneID" id="93003694"/>
<dbReference type="KEGG" id="bas:BUsg_228"/>
<dbReference type="eggNOG" id="COG0233">
    <property type="taxonomic scope" value="Bacteria"/>
</dbReference>
<dbReference type="HOGENOM" id="CLU_073981_2_1_6"/>
<dbReference type="Proteomes" id="UP000000416">
    <property type="component" value="Chromosome"/>
</dbReference>
<dbReference type="GO" id="GO:0005829">
    <property type="term" value="C:cytosol"/>
    <property type="evidence" value="ECO:0007669"/>
    <property type="project" value="GOC"/>
</dbReference>
<dbReference type="GO" id="GO:0043023">
    <property type="term" value="F:ribosomal large subunit binding"/>
    <property type="evidence" value="ECO:0007669"/>
    <property type="project" value="TreeGrafter"/>
</dbReference>
<dbReference type="GO" id="GO:0002184">
    <property type="term" value="P:cytoplasmic translational termination"/>
    <property type="evidence" value="ECO:0007669"/>
    <property type="project" value="TreeGrafter"/>
</dbReference>
<dbReference type="CDD" id="cd00520">
    <property type="entry name" value="RRF"/>
    <property type="match status" value="1"/>
</dbReference>
<dbReference type="FunFam" id="1.10.132.20:FF:000001">
    <property type="entry name" value="Ribosome-recycling factor"/>
    <property type="match status" value="1"/>
</dbReference>
<dbReference type="FunFam" id="3.30.1360.40:FF:000001">
    <property type="entry name" value="Ribosome-recycling factor"/>
    <property type="match status" value="1"/>
</dbReference>
<dbReference type="Gene3D" id="3.30.1360.40">
    <property type="match status" value="1"/>
</dbReference>
<dbReference type="Gene3D" id="1.10.132.20">
    <property type="entry name" value="Ribosome-recycling factor"/>
    <property type="match status" value="1"/>
</dbReference>
<dbReference type="HAMAP" id="MF_00040">
    <property type="entry name" value="RRF"/>
    <property type="match status" value="1"/>
</dbReference>
<dbReference type="InterPro" id="IPR002661">
    <property type="entry name" value="Ribosome_recyc_fac"/>
</dbReference>
<dbReference type="InterPro" id="IPR023584">
    <property type="entry name" value="Ribosome_recyc_fac_dom"/>
</dbReference>
<dbReference type="InterPro" id="IPR036191">
    <property type="entry name" value="RRF_sf"/>
</dbReference>
<dbReference type="NCBIfam" id="TIGR00496">
    <property type="entry name" value="frr"/>
    <property type="match status" value="1"/>
</dbReference>
<dbReference type="PANTHER" id="PTHR20982:SF3">
    <property type="entry name" value="MITOCHONDRIAL RIBOSOME RECYCLING FACTOR PSEUDO 1"/>
    <property type="match status" value="1"/>
</dbReference>
<dbReference type="PANTHER" id="PTHR20982">
    <property type="entry name" value="RIBOSOME RECYCLING FACTOR"/>
    <property type="match status" value="1"/>
</dbReference>
<dbReference type="Pfam" id="PF01765">
    <property type="entry name" value="RRF"/>
    <property type="match status" value="1"/>
</dbReference>
<dbReference type="SUPFAM" id="SSF55194">
    <property type="entry name" value="Ribosome recycling factor, RRF"/>
    <property type="match status" value="1"/>
</dbReference>
<name>RRF_BUCAP</name>
<accession>Q8K9S8</accession>